<comment type="function">
    <text evidence="1">Involved in pinching off the separated nuclei at the cleavage furrow and in cytokinesis. Required for mitotic integrity and maintenance of chromosomal stability. Protects cells against mitotic errors, centrosomal amplification, micronucleus formation and aneuploidy. Plays a key role of midbody function involving abscission of the daughter cells during cytokinesis and appropriate chromosomal and nuclear segregation into the daughter cells.</text>
</comment>
<comment type="subcellular location">
    <subcellularLocation>
        <location evidence="1">Cytoplasm</location>
    </subcellularLocation>
    <subcellularLocation>
        <location evidence="1">Midbody</location>
    </subcellularLocation>
    <text evidence="1">In mitotic cells, concentrates in the midbody of the cytoplasmic bridge linking daughter cells as they are about to separate during cytokinesis.</text>
</comment>
<dbReference type="EMBL" id="CR858151">
    <property type="protein sequence ID" value="CAH90390.1"/>
    <property type="molecule type" value="mRNA"/>
</dbReference>
<dbReference type="RefSeq" id="NP_001125190.1">
    <property type="nucleotide sequence ID" value="NM_001131718.2"/>
</dbReference>
<dbReference type="SMR" id="Q5RCW7"/>
<dbReference type="FunCoup" id="Q5RCW7">
    <property type="interactions" value="122"/>
</dbReference>
<dbReference type="STRING" id="9601.ENSPPYP00000015526"/>
<dbReference type="Ensembl" id="ENSPPYT00000016143.3">
    <property type="protein sequence ID" value="ENSPPYP00000015526.3"/>
    <property type="gene ID" value="ENSPPYG00000013878.3"/>
</dbReference>
<dbReference type="GeneID" id="100172081"/>
<dbReference type="KEGG" id="pon:100172081"/>
<dbReference type="CTD" id="200942"/>
<dbReference type="eggNOG" id="KOG1072">
    <property type="taxonomic scope" value="Eukaryota"/>
</dbReference>
<dbReference type="GeneTree" id="ENSGT00940000160815"/>
<dbReference type="HOGENOM" id="CLU_046864_0_0_1"/>
<dbReference type="InParanoid" id="Q5RCW7"/>
<dbReference type="OMA" id="VWIKPSR"/>
<dbReference type="OrthoDB" id="45365at2759"/>
<dbReference type="Proteomes" id="UP000001595">
    <property type="component" value="Chromosome 3"/>
</dbReference>
<dbReference type="GO" id="GO:0110070">
    <property type="term" value="C:cellularization cleavage furrow"/>
    <property type="evidence" value="ECO:0000250"/>
    <property type="project" value="UniProtKB"/>
</dbReference>
<dbReference type="GO" id="GO:0005737">
    <property type="term" value="C:cytoplasm"/>
    <property type="evidence" value="ECO:0000250"/>
    <property type="project" value="UniProtKB"/>
</dbReference>
<dbReference type="GO" id="GO:0005829">
    <property type="term" value="C:cytosol"/>
    <property type="evidence" value="ECO:0007669"/>
    <property type="project" value="Ensembl"/>
</dbReference>
<dbReference type="GO" id="GO:0045171">
    <property type="term" value="C:intercellular bridge"/>
    <property type="evidence" value="ECO:0000250"/>
    <property type="project" value="UniProtKB"/>
</dbReference>
<dbReference type="GO" id="GO:0030496">
    <property type="term" value="C:midbody"/>
    <property type="evidence" value="ECO:0000250"/>
    <property type="project" value="UniProtKB"/>
</dbReference>
<dbReference type="GO" id="GO:1902410">
    <property type="term" value="P:mitotic cytokinetic process"/>
    <property type="evidence" value="ECO:0000250"/>
    <property type="project" value="UniProtKB"/>
</dbReference>
<dbReference type="GO" id="GO:0140014">
    <property type="term" value="P:mitotic nuclear division"/>
    <property type="evidence" value="ECO:0000250"/>
    <property type="project" value="UniProtKB"/>
</dbReference>
<dbReference type="GO" id="GO:0098813">
    <property type="term" value="P:nuclear chromosome segregation"/>
    <property type="evidence" value="ECO:0000250"/>
    <property type="project" value="UniProtKB"/>
</dbReference>
<dbReference type="FunFam" id="2.120.10.80:FF:000053">
    <property type="entry name" value="Kelch domain-containing protein 8B"/>
    <property type="match status" value="1"/>
</dbReference>
<dbReference type="FunFam" id="2.120.10.80:FF:000066">
    <property type="entry name" value="Kelch domain-containing protein 8B"/>
    <property type="match status" value="1"/>
</dbReference>
<dbReference type="Gene3D" id="2.120.10.80">
    <property type="entry name" value="Kelch-type beta propeller"/>
    <property type="match status" value="3"/>
</dbReference>
<dbReference type="InterPro" id="IPR015915">
    <property type="entry name" value="Kelch-typ_b-propeller"/>
</dbReference>
<dbReference type="InterPro" id="IPR006652">
    <property type="entry name" value="Kelch_1"/>
</dbReference>
<dbReference type="InterPro" id="IPR051746">
    <property type="entry name" value="Kelch_domain_containing_8"/>
</dbReference>
<dbReference type="PANTHER" id="PTHR46260:SF2">
    <property type="entry name" value="KELCH DOMAIN-CONTAINING PROTEIN 8B"/>
    <property type="match status" value="1"/>
</dbReference>
<dbReference type="PANTHER" id="PTHR46260">
    <property type="entry name" value="RING-TYPE DOMAIN-CONTAINING PROTEIN"/>
    <property type="match status" value="1"/>
</dbReference>
<dbReference type="Pfam" id="PF01344">
    <property type="entry name" value="Kelch_1"/>
    <property type="match status" value="2"/>
</dbReference>
<dbReference type="Pfam" id="PF24681">
    <property type="entry name" value="Kelch_KLHDC2_KLHL20_DRC7"/>
    <property type="match status" value="1"/>
</dbReference>
<dbReference type="SMART" id="SM00612">
    <property type="entry name" value="Kelch"/>
    <property type="match status" value="6"/>
</dbReference>
<dbReference type="SUPFAM" id="SSF117281">
    <property type="entry name" value="Kelch motif"/>
    <property type="match status" value="2"/>
</dbReference>
<evidence type="ECO:0000250" key="1">
    <source>
        <dbReference type="UniProtKB" id="Q8IXV7"/>
    </source>
</evidence>
<organism>
    <name type="scientific">Pongo abelii</name>
    <name type="common">Sumatran orangutan</name>
    <name type="synonym">Pongo pygmaeus abelii</name>
    <dbReference type="NCBI Taxonomy" id="9601"/>
    <lineage>
        <taxon>Eukaryota</taxon>
        <taxon>Metazoa</taxon>
        <taxon>Chordata</taxon>
        <taxon>Craniata</taxon>
        <taxon>Vertebrata</taxon>
        <taxon>Euteleostomi</taxon>
        <taxon>Mammalia</taxon>
        <taxon>Eutheria</taxon>
        <taxon>Euarchontoglires</taxon>
        <taxon>Primates</taxon>
        <taxon>Haplorrhini</taxon>
        <taxon>Catarrhini</taxon>
        <taxon>Hominidae</taxon>
        <taxon>Pongo</taxon>
    </lineage>
</organism>
<protein>
    <recommendedName>
        <fullName>Kelch domain-containing protein 8B</fullName>
    </recommendedName>
</protein>
<feature type="chain" id="PRO_0000119133" description="Kelch domain-containing protein 8B">
    <location>
        <begin position="1"/>
        <end position="354"/>
    </location>
</feature>
<feature type="repeat" description="Kelch 1">
    <location>
        <begin position="1"/>
        <end position="31"/>
    </location>
</feature>
<feature type="repeat" description="Kelch 2">
    <location>
        <begin position="32"/>
        <end position="79"/>
    </location>
</feature>
<feature type="repeat" description="Kelch 3">
    <location>
        <begin position="81"/>
        <end position="127"/>
    </location>
</feature>
<feature type="repeat" description="Kelch 4">
    <location>
        <begin position="128"/>
        <end position="175"/>
    </location>
</feature>
<feature type="repeat" description="Kelch 5">
    <location>
        <begin position="176"/>
        <end position="222"/>
    </location>
</feature>
<feature type="repeat" description="Kelch 6">
    <location>
        <begin position="224"/>
        <end position="281"/>
    </location>
</feature>
<feature type="repeat" description="Kelch 7">
    <location>
        <begin position="282"/>
        <end position="329"/>
    </location>
</feature>
<feature type="repeat" description="Kelch 8">
    <location>
        <begin position="331"/>
        <end position="354"/>
    </location>
</feature>
<reference key="1">
    <citation type="submission" date="2004-11" db="EMBL/GenBank/DDBJ databases">
        <authorList>
            <consortium name="The German cDNA consortium"/>
        </authorList>
    </citation>
    <scope>NUCLEOTIDE SEQUENCE [LARGE SCALE MRNA]</scope>
    <source>
        <tissue>Heart</tissue>
    </source>
</reference>
<sequence>MSAGGGRAFAWQVFPPMPTCRVYGTVAHQDEHLLVLGGCGRAGLPLDTAETLDMASHTWLALAPLPTARAGAAAVVLGKQVLVVGGVDEVQSPVAAVEAFLMDEGRWERRATLPQAAMGVATVERDGMVYALGGMGPDTAPQAQVRVYEPRRDCWLSLPSMPTPCYGASTFLHGNKIYVLGGRQGKLPVTAFEAFDLEARTWTRHPSLPSRRAFAGCAMAEGSVFSLGGLQQPGPHNFYSRPHFVNTVEMFDLEHGSWTKLPRSLRMRDKRADFVVGSLGGHIVAIGGLGNQPCPLGSVESFSLARRRWEALPAMPTARCSCSSLQAGPRLFVIGGVAQGPSQAVEALCLRDGV</sequence>
<proteinExistence type="evidence at transcript level"/>
<keyword id="KW-0131">Cell cycle</keyword>
<keyword id="KW-0132">Cell division</keyword>
<keyword id="KW-0963">Cytoplasm</keyword>
<keyword id="KW-0880">Kelch repeat</keyword>
<keyword id="KW-1185">Reference proteome</keyword>
<keyword id="KW-0677">Repeat</keyword>
<accession>Q5RCW7</accession>
<gene>
    <name type="primary">KLHDC8B</name>
</gene>
<name>KLD8B_PONAB</name>